<keyword id="KW-0113">Calvin cycle</keyword>
<keyword id="KW-0119">Carbohydrate metabolism</keyword>
<keyword id="KW-0963">Cytoplasm</keyword>
<keyword id="KW-0378">Hydrolase</keyword>
<keyword id="KW-0460">Magnesium</keyword>
<keyword id="KW-0479">Metal-binding</keyword>
<keyword id="KW-1185">Reference proteome</keyword>
<name>F16PA_RHORT</name>
<feature type="chain" id="PRO_0000364680" description="Fructose-1,6-bisphosphatase class 1">
    <location>
        <begin position="1"/>
        <end position="355"/>
    </location>
</feature>
<feature type="binding site" evidence="1">
    <location>
        <position position="94"/>
    </location>
    <ligand>
        <name>Mg(2+)</name>
        <dbReference type="ChEBI" id="CHEBI:18420"/>
        <label>1</label>
    </ligand>
</feature>
<feature type="binding site" evidence="1">
    <location>
        <position position="116"/>
    </location>
    <ligand>
        <name>Mg(2+)</name>
        <dbReference type="ChEBI" id="CHEBI:18420"/>
        <label>1</label>
    </ligand>
</feature>
<feature type="binding site" evidence="1">
    <location>
        <position position="116"/>
    </location>
    <ligand>
        <name>Mg(2+)</name>
        <dbReference type="ChEBI" id="CHEBI:18420"/>
        <label>2</label>
    </ligand>
</feature>
<feature type="binding site" evidence="1">
    <location>
        <position position="118"/>
    </location>
    <ligand>
        <name>Mg(2+)</name>
        <dbReference type="ChEBI" id="CHEBI:18420"/>
        <label>1</label>
    </ligand>
</feature>
<feature type="binding site" evidence="1">
    <location>
        <begin position="119"/>
        <end position="122"/>
    </location>
    <ligand>
        <name>substrate</name>
    </ligand>
</feature>
<feature type="binding site" evidence="1">
    <location>
        <position position="119"/>
    </location>
    <ligand>
        <name>Mg(2+)</name>
        <dbReference type="ChEBI" id="CHEBI:18420"/>
        <label>2</label>
    </ligand>
</feature>
<feature type="binding site" evidence="1">
    <location>
        <position position="211"/>
    </location>
    <ligand>
        <name>substrate</name>
    </ligand>
</feature>
<feature type="binding site" evidence="1">
    <location>
        <begin position="263"/>
        <end position="265"/>
    </location>
    <ligand>
        <name>substrate</name>
    </ligand>
</feature>
<feature type="binding site" evidence="1">
    <location>
        <position position="283"/>
    </location>
    <ligand>
        <name>Mg(2+)</name>
        <dbReference type="ChEBI" id="CHEBI:18420"/>
        <label>2</label>
    </ligand>
</feature>
<protein>
    <recommendedName>
        <fullName evidence="1">Fructose-1,6-bisphosphatase class 1</fullName>
        <shortName evidence="1">FBPase class 1</shortName>
        <ecNumber evidence="1">3.1.3.11</ecNumber>
    </recommendedName>
    <alternativeName>
        <fullName evidence="1">D-fructose-1,6-bisphosphate 1-phosphohydrolase class 1</fullName>
    </alternativeName>
</protein>
<dbReference type="EC" id="3.1.3.11" evidence="1"/>
<dbReference type="EMBL" id="CP000230">
    <property type="protein sequence ID" value="ABC23203.1"/>
    <property type="status" value="ALT_INIT"/>
    <property type="molecule type" value="Genomic_DNA"/>
</dbReference>
<dbReference type="RefSeq" id="WP_011390156.1">
    <property type="nucleotide sequence ID" value="NC_007643.1"/>
</dbReference>
<dbReference type="RefSeq" id="YP_427490.1">
    <property type="nucleotide sequence ID" value="NC_007643.1"/>
</dbReference>
<dbReference type="SMR" id="Q2RRP2"/>
<dbReference type="STRING" id="269796.Rru_A2403"/>
<dbReference type="EnsemblBacteria" id="ABC23203">
    <property type="protein sequence ID" value="ABC23203"/>
    <property type="gene ID" value="Rru_A2403"/>
</dbReference>
<dbReference type="KEGG" id="rru:Rru_A2403"/>
<dbReference type="PATRIC" id="fig|269796.9.peg.2505"/>
<dbReference type="eggNOG" id="COG0158">
    <property type="taxonomic scope" value="Bacteria"/>
</dbReference>
<dbReference type="HOGENOM" id="CLU_039977_0_0_5"/>
<dbReference type="UniPathway" id="UPA00116"/>
<dbReference type="Proteomes" id="UP000001929">
    <property type="component" value="Chromosome"/>
</dbReference>
<dbReference type="GO" id="GO:0005829">
    <property type="term" value="C:cytosol"/>
    <property type="evidence" value="ECO:0007669"/>
    <property type="project" value="TreeGrafter"/>
</dbReference>
<dbReference type="GO" id="GO:0042132">
    <property type="term" value="F:fructose 1,6-bisphosphate 1-phosphatase activity"/>
    <property type="evidence" value="ECO:0007669"/>
    <property type="project" value="UniProtKB-UniRule"/>
</dbReference>
<dbReference type="GO" id="GO:0000287">
    <property type="term" value="F:magnesium ion binding"/>
    <property type="evidence" value="ECO:0007669"/>
    <property type="project" value="UniProtKB-UniRule"/>
</dbReference>
<dbReference type="GO" id="GO:0030388">
    <property type="term" value="P:fructose 1,6-bisphosphate metabolic process"/>
    <property type="evidence" value="ECO:0007669"/>
    <property type="project" value="TreeGrafter"/>
</dbReference>
<dbReference type="GO" id="GO:0006002">
    <property type="term" value="P:fructose 6-phosphate metabolic process"/>
    <property type="evidence" value="ECO:0007669"/>
    <property type="project" value="TreeGrafter"/>
</dbReference>
<dbReference type="GO" id="GO:0006000">
    <property type="term" value="P:fructose metabolic process"/>
    <property type="evidence" value="ECO:0007669"/>
    <property type="project" value="TreeGrafter"/>
</dbReference>
<dbReference type="GO" id="GO:0006094">
    <property type="term" value="P:gluconeogenesis"/>
    <property type="evidence" value="ECO:0007669"/>
    <property type="project" value="UniProtKB-UniRule"/>
</dbReference>
<dbReference type="GO" id="GO:0019253">
    <property type="term" value="P:reductive pentose-phosphate cycle"/>
    <property type="evidence" value="ECO:0007669"/>
    <property type="project" value="UniProtKB-UniRule"/>
</dbReference>
<dbReference type="GO" id="GO:0005986">
    <property type="term" value="P:sucrose biosynthetic process"/>
    <property type="evidence" value="ECO:0007669"/>
    <property type="project" value="TreeGrafter"/>
</dbReference>
<dbReference type="CDD" id="cd00354">
    <property type="entry name" value="FBPase"/>
    <property type="match status" value="1"/>
</dbReference>
<dbReference type="FunFam" id="3.40.190.80:FF:000011">
    <property type="entry name" value="Fructose-1,6-bisphosphatase class 1"/>
    <property type="match status" value="1"/>
</dbReference>
<dbReference type="Gene3D" id="3.40.190.80">
    <property type="match status" value="1"/>
</dbReference>
<dbReference type="Gene3D" id="3.30.540.10">
    <property type="entry name" value="Fructose-1,6-Bisphosphatase, subunit A, domain 1"/>
    <property type="match status" value="1"/>
</dbReference>
<dbReference type="HAMAP" id="MF_01855">
    <property type="entry name" value="FBPase_class1"/>
    <property type="match status" value="1"/>
</dbReference>
<dbReference type="InterPro" id="IPR044015">
    <property type="entry name" value="FBPase_C_dom"/>
</dbReference>
<dbReference type="InterPro" id="IPR000146">
    <property type="entry name" value="FBPase_class-1"/>
</dbReference>
<dbReference type="InterPro" id="IPR033391">
    <property type="entry name" value="FBPase_N"/>
</dbReference>
<dbReference type="InterPro" id="IPR028343">
    <property type="entry name" value="FBPtase"/>
</dbReference>
<dbReference type="InterPro" id="IPR020548">
    <property type="entry name" value="Fructose_bisphosphatase_AS"/>
</dbReference>
<dbReference type="NCBIfam" id="NF006779">
    <property type="entry name" value="PRK09293.1-3"/>
    <property type="match status" value="1"/>
</dbReference>
<dbReference type="NCBIfam" id="NF006780">
    <property type="entry name" value="PRK09293.1-4"/>
    <property type="match status" value="1"/>
</dbReference>
<dbReference type="PANTHER" id="PTHR11556">
    <property type="entry name" value="FRUCTOSE-1,6-BISPHOSPHATASE-RELATED"/>
    <property type="match status" value="1"/>
</dbReference>
<dbReference type="PANTHER" id="PTHR11556:SF35">
    <property type="entry name" value="SEDOHEPTULOSE-1,7-BISPHOSPHATASE, CHLOROPLASTIC"/>
    <property type="match status" value="1"/>
</dbReference>
<dbReference type="Pfam" id="PF00316">
    <property type="entry name" value="FBPase"/>
    <property type="match status" value="1"/>
</dbReference>
<dbReference type="Pfam" id="PF18913">
    <property type="entry name" value="FBPase_C"/>
    <property type="match status" value="1"/>
</dbReference>
<dbReference type="PIRSF" id="PIRSF500210">
    <property type="entry name" value="FBPtase"/>
    <property type="match status" value="1"/>
</dbReference>
<dbReference type="PIRSF" id="PIRSF000904">
    <property type="entry name" value="FBPtase_SBPase"/>
    <property type="match status" value="1"/>
</dbReference>
<dbReference type="PRINTS" id="PR00115">
    <property type="entry name" value="F16BPHPHTASE"/>
</dbReference>
<dbReference type="SUPFAM" id="SSF56655">
    <property type="entry name" value="Carbohydrate phosphatase"/>
    <property type="match status" value="1"/>
</dbReference>
<dbReference type="PROSITE" id="PS00124">
    <property type="entry name" value="FBPASE"/>
    <property type="match status" value="1"/>
</dbReference>
<reference key="1">
    <citation type="journal article" date="2011" name="Stand. Genomic Sci.">
        <title>Complete genome sequence of Rhodospirillum rubrum type strain (S1).</title>
        <authorList>
            <person name="Munk A.C."/>
            <person name="Copeland A."/>
            <person name="Lucas S."/>
            <person name="Lapidus A."/>
            <person name="Del Rio T.G."/>
            <person name="Barry K."/>
            <person name="Detter J.C."/>
            <person name="Hammon N."/>
            <person name="Israni S."/>
            <person name="Pitluck S."/>
            <person name="Brettin T."/>
            <person name="Bruce D."/>
            <person name="Han C."/>
            <person name="Tapia R."/>
            <person name="Gilna P."/>
            <person name="Schmutz J."/>
            <person name="Larimer F."/>
            <person name="Land M."/>
            <person name="Kyrpides N.C."/>
            <person name="Mavromatis K."/>
            <person name="Richardson P."/>
            <person name="Rohde M."/>
            <person name="Goeker M."/>
            <person name="Klenk H.P."/>
            <person name="Zhang Y."/>
            <person name="Roberts G.P."/>
            <person name="Reslewic S."/>
            <person name="Schwartz D.C."/>
        </authorList>
    </citation>
    <scope>NUCLEOTIDE SEQUENCE [LARGE SCALE GENOMIC DNA]</scope>
    <source>
        <strain>ATCC 11170 / ATH 1.1.1 / DSM 467 / LMG 4362 / NCIMB 8255 / S1</strain>
    </source>
</reference>
<organism>
    <name type="scientific">Rhodospirillum rubrum (strain ATCC 11170 / ATH 1.1.1 / DSM 467 / LMG 4362 / NCIMB 8255 / S1)</name>
    <dbReference type="NCBI Taxonomy" id="269796"/>
    <lineage>
        <taxon>Bacteria</taxon>
        <taxon>Pseudomonadati</taxon>
        <taxon>Pseudomonadota</taxon>
        <taxon>Alphaproteobacteria</taxon>
        <taxon>Rhodospirillales</taxon>
        <taxon>Rhodospirillaceae</taxon>
        <taxon>Rhodospirillum</taxon>
    </lineage>
</organism>
<gene>
    <name evidence="1" type="primary">fbp</name>
    <name type="ordered locus">Rru_A2403</name>
</gene>
<comment type="catalytic activity">
    <reaction evidence="1">
        <text>beta-D-fructose 1,6-bisphosphate + H2O = beta-D-fructose 6-phosphate + phosphate</text>
        <dbReference type="Rhea" id="RHEA:11064"/>
        <dbReference type="ChEBI" id="CHEBI:15377"/>
        <dbReference type="ChEBI" id="CHEBI:32966"/>
        <dbReference type="ChEBI" id="CHEBI:43474"/>
        <dbReference type="ChEBI" id="CHEBI:57634"/>
        <dbReference type="EC" id="3.1.3.11"/>
    </reaction>
</comment>
<comment type="cofactor">
    <cofactor evidence="1">
        <name>Mg(2+)</name>
        <dbReference type="ChEBI" id="CHEBI:18420"/>
    </cofactor>
    <text evidence="1">Binds 2 magnesium ions per subunit.</text>
</comment>
<comment type="pathway">
    <text evidence="1">Carbohydrate biosynthesis; Calvin cycle.</text>
</comment>
<comment type="subunit">
    <text evidence="1">Homotetramer.</text>
</comment>
<comment type="subcellular location">
    <subcellularLocation>
        <location evidence="1">Cytoplasm</location>
    </subcellularLocation>
</comment>
<comment type="similarity">
    <text evidence="1">Belongs to the FBPase class 1 family.</text>
</comment>
<comment type="sequence caution" evidence="2">
    <conflict type="erroneous initiation">
        <sequence resource="EMBL-CDS" id="ABC23203"/>
    </conflict>
</comment>
<proteinExistence type="inferred from homology"/>
<sequence length="355" mass="38757">MLATDRTTLAQFLVEECRGRAGDDSELLGLLLDVAQACKTISKMTAMGSLAGVHGYNGDVNPQGENQARLDLMSNQAFVRATERTGHAAGLASEEMEEVLGFPESYARGTLLLVFDPLDGSSNIDINGTVGSIFSILPMPRPGEAPQTADFLQSGRQQVAAGYALYGPSTMFVLTIGSGVHGFTLDPLLGDFILTHPSMTVIPESGEFAINSSNSRFWEPPIRAYVDELLAGRSGPRSKDYNMRWIAALVADVHRILLRGGIYLYPRDTKTPDLAGRLRLLYEAAPVAFLMEQAGGRCTTGTRTMLDLVPGSLHERVPLIFGSAVEVERVETLYREPQRREFATPLFNQRGLFRD</sequence>
<evidence type="ECO:0000255" key="1">
    <source>
        <dbReference type="HAMAP-Rule" id="MF_01855"/>
    </source>
</evidence>
<evidence type="ECO:0000305" key="2"/>
<accession>Q2RRP2</accession>